<keyword id="KW-0131">Cell cycle</keyword>
<keyword id="KW-0132">Cell division</keyword>
<keyword id="KW-1185">Reference proteome</keyword>
<keyword id="KW-0717">Septation</keyword>
<reference key="1">
    <citation type="journal article" date="2009" name="J. Bacteriol.">
        <title>Complete and draft genome sequences of six members of the Aquificales.</title>
        <authorList>
            <person name="Reysenbach A.-L."/>
            <person name="Hamamura N."/>
            <person name="Podar M."/>
            <person name="Griffiths E."/>
            <person name="Ferreira S."/>
            <person name="Hochstein R."/>
            <person name="Heidelberg J."/>
            <person name="Johnson J."/>
            <person name="Mead D."/>
            <person name="Pohorille A."/>
            <person name="Sarmiento M."/>
            <person name="Schweighofer K."/>
            <person name="Seshadri R."/>
            <person name="Voytek M.A."/>
        </authorList>
    </citation>
    <scope>NUCLEOTIDE SEQUENCE [LARGE SCALE GENOMIC DNA]</scope>
    <source>
        <strain>DSM 14350 / EX-H1</strain>
    </source>
</reference>
<evidence type="ECO:0000255" key="1">
    <source>
        <dbReference type="HAMAP-Rule" id="MF_00267"/>
    </source>
</evidence>
<dbReference type="EMBL" id="CP001230">
    <property type="protein sequence ID" value="ACO03039.1"/>
    <property type="molecule type" value="Genomic_DNA"/>
</dbReference>
<dbReference type="RefSeq" id="WP_012675278.1">
    <property type="nucleotide sequence ID" value="NC_012440.1"/>
</dbReference>
<dbReference type="SMR" id="C0QR62"/>
<dbReference type="STRING" id="123214.PERMA_1390"/>
<dbReference type="PaxDb" id="123214-PERMA_1390"/>
<dbReference type="KEGG" id="pmx:PERMA_1390"/>
<dbReference type="eggNOG" id="COG0850">
    <property type="taxonomic scope" value="Bacteria"/>
</dbReference>
<dbReference type="HOGENOM" id="CLU_048711_2_0_0"/>
<dbReference type="OrthoDB" id="9790810at2"/>
<dbReference type="Proteomes" id="UP000001366">
    <property type="component" value="Chromosome"/>
</dbReference>
<dbReference type="GO" id="GO:0000902">
    <property type="term" value="P:cell morphogenesis"/>
    <property type="evidence" value="ECO:0007669"/>
    <property type="project" value="InterPro"/>
</dbReference>
<dbReference type="GO" id="GO:0000917">
    <property type="term" value="P:division septum assembly"/>
    <property type="evidence" value="ECO:0007669"/>
    <property type="project" value="UniProtKB-KW"/>
</dbReference>
<dbReference type="GO" id="GO:0051302">
    <property type="term" value="P:regulation of cell division"/>
    <property type="evidence" value="ECO:0007669"/>
    <property type="project" value="InterPro"/>
</dbReference>
<dbReference type="GO" id="GO:1901891">
    <property type="term" value="P:regulation of cell septum assembly"/>
    <property type="evidence" value="ECO:0007669"/>
    <property type="project" value="InterPro"/>
</dbReference>
<dbReference type="Gene3D" id="2.160.20.70">
    <property type="match status" value="1"/>
</dbReference>
<dbReference type="Gene3D" id="3.30.160.540">
    <property type="match status" value="1"/>
</dbReference>
<dbReference type="HAMAP" id="MF_00267">
    <property type="entry name" value="MinC"/>
    <property type="match status" value="1"/>
</dbReference>
<dbReference type="InterPro" id="IPR016098">
    <property type="entry name" value="CAP/MinC_C"/>
</dbReference>
<dbReference type="InterPro" id="IPR013033">
    <property type="entry name" value="MinC"/>
</dbReference>
<dbReference type="InterPro" id="IPR036145">
    <property type="entry name" value="MinC_C_sf"/>
</dbReference>
<dbReference type="InterPro" id="IPR007874">
    <property type="entry name" value="MinC_N"/>
</dbReference>
<dbReference type="InterPro" id="IPR005526">
    <property type="entry name" value="Septum_form_inhib_MinC_C"/>
</dbReference>
<dbReference type="NCBIfam" id="TIGR01222">
    <property type="entry name" value="minC"/>
    <property type="match status" value="1"/>
</dbReference>
<dbReference type="PANTHER" id="PTHR34108">
    <property type="entry name" value="SEPTUM SITE-DETERMINING PROTEIN MINC"/>
    <property type="match status" value="1"/>
</dbReference>
<dbReference type="PANTHER" id="PTHR34108:SF1">
    <property type="entry name" value="SEPTUM SITE-DETERMINING PROTEIN MINC"/>
    <property type="match status" value="1"/>
</dbReference>
<dbReference type="Pfam" id="PF03775">
    <property type="entry name" value="MinC_C"/>
    <property type="match status" value="1"/>
</dbReference>
<dbReference type="Pfam" id="PF05209">
    <property type="entry name" value="MinC_N"/>
    <property type="match status" value="1"/>
</dbReference>
<dbReference type="SUPFAM" id="SSF63848">
    <property type="entry name" value="Cell-division inhibitor MinC, C-terminal domain"/>
    <property type="match status" value="1"/>
</dbReference>
<comment type="function">
    <text evidence="1">Cell division inhibitor that blocks the formation of polar Z ring septums. Rapidly oscillates between the poles of the cell to destabilize FtsZ filaments that have formed before they mature into polar Z rings. Prevents FtsZ polymerization.</text>
</comment>
<comment type="subunit">
    <text evidence="1">Interacts with MinD and FtsZ.</text>
</comment>
<comment type="similarity">
    <text evidence="1">Belongs to the MinC family.</text>
</comment>
<organism>
    <name type="scientific">Persephonella marina (strain DSM 14350 / EX-H1)</name>
    <dbReference type="NCBI Taxonomy" id="123214"/>
    <lineage>
        <taxon>Bacteria</taxon>
        <taxon>Pseudomonadati</taxon>
        <taxon>Aquificota</taxon>
        <taxon>Aquificia</taxon>
        <taxon>Aquificales</taxon>
        <taxon>Hydrogenothermaceae</taxon>
        <taxon>Persephonella</taxon>
    </lineage>
</organism>
<accession>C0QR62</accession>
<sequence>MGLEIKGVTIPALMIKLDKSRSFEENLEELEKKLSSAFFQGSVSVVDLSDMELSEDQKEKIESILKKYNSKVLGYRTSDKRSEKRSISNVSEKKSLKIINKTLRSGQRVEYDGDILIIGDVNPDAYVIASGNIIVMGTLRGIVHAGANGDETAVIMALKLKPQQLRIASYLTRSPDEMEEPEYPEKAYIEDNQIYIDKI</sequence>
<feature type="chain" id="PRO_1000191253" description="Probable septum site-determining protein MinC">
    <location>
        <begin position="1"/>
        <end position="199"/>
    </location>
</feature>
<name>MINC_PERMH</name>
<proteinExistence type="inferred from homology"/>
<gene>
    <name evidence="1" type="primary">minC</name>
    <name type="ordered locus">PERMA_1390</name>
</gene>
<protein>
    <recommendedName>
        <fullName evidence="1">Probable septum site-determining protein MinC</fullName>
    </recommendedName>
</protein>